<comment type="subcellular location">
    <subcellularLocation>
        <location evidence="1">Cell inner membrane</location>
        <topology evidence="1">Multi-pass membrane protein</topology>
    </subcellularLocation>
</comment>
<comment type="similarity">
    <text evidence="1">Belongs to the major facilitator superfamily. DHA1 family. MdtH (TC 2.A.1.2.21) subfamily.</text>
</comment>
<evidence type="ECO:0000255" key="1">
    <source>
        <dbReference type="HAMAP-Rule" id="MF_01529"/>
    </source>
</evidence>
<organism>
    <name type="scientific">Salmonella schwarzengrund (strain CVM19633)</name>
    <dbReference type="NCBI Taxonomy" id="439843"/>
    <lineage>
        <taxon>Bacteria</taxon>
        <taxon>Pseudomonadati</taxon>
        <taxon>Pseudomonadota</taxon>
        <taxon>Gammaproteobacteria</taxon>
        <taxon>Enterobacterales</taxon>
        <taxon>Enterobacteriaceae</taxon>
        <taxon>Salmonella</taxon>
    </lineage>
</organism>
<protein>
    <recommendedName>
        <fullName evidence="1">Multidrug resistance protein MdtH</fullName>
    </recommendedName>
</protein>
<gene>
    <name evidence="1" type="primary">mdtH</name>
    <name type="ordered locus">SeSA_A1234</name>
</gene>
<proteinExistence type="inferred from homology"/>
<reference key="1">
    <citation type="journal article" date="2011" name="J. Bacteriol.">
        <title>Comparative genomics of 28 Salmonella enterica isolates: evidence for CRISPR-mediated adaptive sublineage evolution.</title>
        <authorList>
            <person name="Fricke W.F."/>
            <person name="Mammel M.K."/>
            <person name="McDermott P.F."/>
            <person name="Tartera C."/>
            <person name="White D.G."/>
            <person name="Leclerc J.E."/>
            <person name="Ravel J."/>
            <person name="Cebula T.A."/>
        </authorList>
    </citation>
    <scope>NUCLEOTIDE SEQUENCE [LARGE SCALE GENOMIC DNA]</scope>
    <source>
        <strain>CVM19633</strain>
    </source>
</reference>
<feature type="chain" id="PRO_1000200811" description="Multidrug resistance protein MdtH">
    <location>
        <begin position="1"/>
        <end position="402"/>
    </location>
</feature>
<feature type="topological domain" description="Cytoplasmic" evidence="1">
    <location>
        <begin position="1"/>
        <end position="12"/>
    </location>
</feature>
<feature type="transmembrane region" description="Helical" evidence="1">
    <location>
        <begin position="13"/>
        <end position="33"/>
    </location>
</feature>
<feature type="topological domain" description="Periplasmic" evidence="1">
    <location>
        <begin position="34"/>
        <end position="98"/>
    </location>
</feature>
<feature type="transmembrane region" description="Helical" evidence="1">
    <location>
        <begin position="99"/>
        <end position="116"/>
    </location>
</feature>
<feature type="topological domain" description="Cytoplasmic" evidence="1">
    <location>
        <begin position="117"/>
        <end position="138"/>
    </location>
</feature>
<feature type="transmembrane region" description="Helical" evidence="1">
    <location>
        <begin position="139"/>
        <end position="159"/>
    </location>
</feature>
<feature type="topological domain" description="Periplasmic" evidence="1">
    <location>
        <begin position="160"/>
        <end position="164"/>
    </location>
</feature>
<feature type="transmembrane region" description="Helical" evidence="1">
    <location>
        <begin position="165"/>
        <end position="185"/>
    </location>
</feature>
<feature type="topological domain" description="Cytoplasmic" evidence="1">
    <location>
        <begin position="186"/>
        <end position="213"/>
    </location>
</feature>
<feature type="transmembrane region" description="Helical" evidence="1">
    <location>
        <begin position="214"/>
        <end position="234"/>
    </location>
</feature>
<feature type="topological domain" description="Periplasmic" evidence="1">
    <location>
        <begin position="235"/>
        <end position="243"/>
    </location>
</feature>
<feature type="transmembrane region" description="Helical" evidence="1">
    <location>
        <begin position="244"/>
        <end position="264"/>
    </location>
</feature>
<feature type="topological domain" description="Cytoplasmic" evidence="1">
    <location>
        <begin position="265"/>
        <end position="276"/>
    </location>
</feature>
<feature type="transmembrane region" description="Helical" evidence="1">
    <location>
        <begin position="277"/>
        <end position="297"/>
    </location>
</feature>
<feature type="topological domain" description="Periplasmic" evidence="1">
    <location>
        <begin position="298"/>
        <end position="299"/>
    </location>
</feature>
<feature type="transmembrane region" description="Helical" evidence="1">
    <location>
        <begin position="300"/>
        <end position="320"/>
    </location>
</feature>
<feature type="topological domain" description="Cytoplasmic" evidence="1">
    <location>
        <begin position="321"/>
        <end position="339"/>
    </location>
</feature>
<feature type="transmembrane region" description="Helical" evidence="1">
    <location>
        <begin position="340"/>
        <end position="360"/>
    </location>
</feature>
<feature type="topological domain" description="Periplasmic" evidence="1">
    <location>
        <begin position="361"/>
        <end position="367"/>
    </location>
</feature>
<feature type="transmembrane region" description="Helical" evidence="1">
    <location>
        <begin position="368"/>
        <end position="388"/>
    </location>
</feature>
<feature type="topological domain" description="Cytoplasmic" evidence="1">
    <location>
        <begin position="389"/>
        <end position="402"/>
    </location>
</feature>
<keyword id="KW-0997">Cell inner membrane</keyword>
<keyword id="KW-1003">Cell membrane</keyword>
<keyword id="KW-0472">Membrane</keyword>
<keyword id="KW-0812">Transmembrane</keyword>
<keyword id="KW-1133">Transmembrane helix</keyword>
<keyword id="KW-0813">Transport</keyword>
<sequence>MSRVSQARNLGKYFLLIDNMLVVLGFFVVFPLISIRFVDQMGWAAVMVGIALGLRQFIQQGLGIFGGAIADRFGAKPMIVTGMLMRAAGFATMGIAHEPWLLWFSCFLSGLGGTLFDPPRSALVVKLIRPEQRGRFFSLLMMQDSAGAVIGALLGSWLLQYDFRLVCATGAILFILCALFNAWLLPAWKLSTVRTPVREGMRRVMSDKRFVTYVLTLAGYYMLAVQVMLMLPIMVNDIAGSPAAVKWMYAIEACLSLTLLYPIARWSEKRFRLEHRLMAGLLVMSLSMIPIGMVGNLQQLFTLICAFYIGSVIAEPARETLSASLADARARGSYMGFSRLGLAIGGAIGYIGGGWLFDMGKALAQPELPWMMLGIIGFITFLALGWQFSHKRTPRRMLEPGA</sequence>
<dbReference type="EMBL" id="CP001127">
    <property type="protein sequence ID" value="ACF92773.1"/>
    <property type="molecule type" value="Genomic_DNA"/>
</dbReference>
<dbReference type="RefSeq" id="WP_000092174.1">
    <property type="nucleotide sequence ID" value="NC_011094.1"/>
</dbReference>
<dbReference type="SMR" id="B4TTD0"/>
<dbReference type="KEGG" id="sew:SeSA_A1234"/>
<dbReference type="HOGENOM" id="CLU_001265_60_2_6"/>
<dbReference type="Proteomes" id="UP000001865">
    <property type="component" value="Chromosome"/>
</dbReference>
<dbReference type="GO" id="GO:0005886">
    <property type="term" value="C:plasma membrane"/>
    <property type="evidence" value="ECO:0007669"/>
    <property type="project" value="UniProtKB-SubCell"/>
</dbReference>
<dbReference type="GO" id="GO:0022857">
    <property type="term" value="F:transmembrane transporter activity"/>
    <property type="evidence" value="ECO:0007669"/>
    <property type="project" value="UniProtKB-UniRule"/>
</dbReference>
<dbReference type="CDD" id="cd17329">
    <property type="entry name" value="MFS_MdtH_MDR_like"/>
    <property type="match status" value="1"/>
</dbReference>
<dbReference type="FunFam" id="1.20.1250.20:FF:000039">
    <property type="entry name" value="Multidrug resistance protein MdtH"/>
    <property type="match status" value="1"/>
</dbReference>
<dbReference type="Gene3D" id="1.20.1250.20">
    <property type="entry name" value="MFS general substrate transporter like domains"/>
    <property type="match status" value="1"/>
</dbReference>
<dbReference type="HAMAP" id="MF_01529">
    <property type="entry name" value="MFS_MdtH"/>
    <property type="match status" value="1"/>
</dbReference>
<dbReference type="InterPro" id="IPR011701">
    <property type="entry name" value="MFS"/>
</dbReference>
<dbReference type="InterPro" id="IPR020846">
    <property type="entry name" value="MFS_dom"/>
</dbReference>
<dbReference type="InterPro" id="IPR036259">
    <property type="entry name" value="MFS_trans_sf"/>
</dbReference>
<dbReference type="InterPro" id="IPR050171">
    <property type="entry name" value="MFS_Transporters"/>
</dbReference>
<dbReference type="InterPro" id="IPR022855">
    <property type="entry name" value="Multidrug-R_MdtH"/>
</dbReference>
<dbReference type="NCBIfam" id="NF008650">
    <property type="entry name" value="PRK11646.1"/>
    <property type="match status" value="1"/>
</dbReference>
<dbReference type="PANTHER" id="PTHR23517:SF2">
    <property type="entry name" value="MULTIDRUG RESISTANCE PROTEIN MDTH"/>
    <property type="match status" value="1"/>
</dbReference>
<dbReference type="PANTHER" id="PTHR23517">
    <property type="entry name" value="RESISTANCE PROTEIN MDTM, PUTATIVE-RELATED-RELATED"/>
    <property type="match status" value="1"/>
</dbReference>
<dbReference type="Pfam" id="PF07690">
    <property type="entry name" value="MFS_1"/>
    <property type="match status" value="1"/>
</dbReference>
<dbReference type="SUPFAM" id="SSF103473">
    <property type="entry name" value="MFS general substrate transporter"/>
    <property type="match status" value="1"/>
</dbReference>
<dbReference type="PROSITE" id="PS50850">
    <property type="entry name" value="MFS"/>
    <property type="match status" value="1"/>
</dbReference>
<name>MDTH_SALSV</name>
<accession>B4TTD0</accession>